<gene>
    <name evidence="1" type="primary">trpF</name>
    <name type="ordered locus">STH1413</name>
</gene>
<dbReference type="EC" id="5.3.1.24" evidence="1"/>
<dbReference type="EMBL" id="AP006840">
    <property type="protein sequence ID" value="BAD40398.1"/>
    <property type="molecule type" value="Genomic_DNA"/>
</dbReference>
<dbReference type="RefSeq" id="WP_011195543.1">
    <property type="nucleotide sequence ID" value="NC_006177.1"/>
</dbReference>
<dbReference type="SMR" id="Q67PJ5"/>
<dbReference type="STRING" id="292459.STH1413"/>
<dbReference type="KEGG" id="sth:STH1413"/>
<dbReference type="eggNOG" id="COG0135">
    <property type="taxonomic scope" value="Bacteria"/>
</dbReference>
<dbReference type="HOGENOM" id="CLU_076364_1_0_9"/>
<dbReference type="OrthoDB" id="9786954at2"/>
<dbReference type="UniPathway" id="UPA00035">
    <property type="reaction ID" value="UER00042"/>
</dbReference>
<dbReference type="Proteomes" id="UP000000417">
    <property type="component" value="Chromosome"/>
</dbReference>
<dbReference type="GO" id="GO:0004640">
    <property type="term" value="F:phosphoribosylanthranilate isomerase activity"/>
    <property type="evidence" value="ECO:0007669"/>
    <property type="project" value="UniProtKB-UniRule"/>
</dbReference>
<dbReference type="GO" id="GO:0000162">
    <property type="term" value="P:L-tryptophan biosynthetic process"/>
    <property type="evidence" value="ECO:0007669"/>
    <property type="project" value="UniProtKB-UniRule"/>
</dbReference>
<dbReference type="CDD" id="cd00405">
    <property type="entry name" value="PRAI"/>
    <property type="match status" value="1"/>
</dbReference>
<dbReference type="Gene3D" id="3.20.20.70">
    <property type="entry name" value="Aldolase class I"/>
    <property type="match status" value="1"/>
</dbReference>
<dbReference type="HAMAP" id="MF_00135">
    <property type="entry name" value="PRAI"/>
    <property type="match status" value="1"/>
</dbReference>
<dbReference type="InterPro" id="IPR013785">
    <property type="entry name" value="Aldolase_TIM"/>
</dbReference>
<dbReference type="InterPro" id="IPR001240">
    <property type="entry name" value="PRAI_dom"/>
</dbReference>
<dbReference type="InterPro" id="IPR011060">
    <property type="entry name" value="RibuloseP-bd_barrel"/>
</dbReference>
<dbReference type="InterPro" id="IPR044643">
    <property type="entry name" value="TrpF_fam"/>
</dbReference>
<dbReference type="PANTHER" id="PTHR42894">
    <property type="entry name" value="N-(5'-PHOSPHORIBOSYL)ANTHRANILATE ISOMERASE"/>
    <property type="match status" value="1"/>
</dbReference>
<dbReference type="PANTHER" id="PTHR42894:SF1">
    <property type="entry name" value="N-(5'-PHOSPHORIBOSYL)ANTHRANILATE ISOMERASE"/>
    <property type="match status" value="1"/>
</dbReference>
<dbReference type="Pfam" id="PF00697">
    <property type="entry name" value="PRAI"/>
    <property type="match status" value="1"/>
</dbReference>
<dbReference type="SUPFAM" id="SSF51366">
    <property type="entry name" value="Ribulose-phoshate binding barrel"/>
    <property type="match status" value="1"/>
</dbReference>
<organism>
    <name type="scientific">Symbiobacterium thermophilum (strain DSM 24528 / JCM 14929 / IAM 14863 / T)</name>
    <dbReference type="NCBI Taxonomy" id="292459"/>
    <lineage>
        <taxon>Bacteria</taxon>
        <taxon>Bacillati</taxon>
        <taxon>Bacillota</taxon>
        <taxon>Clostridia</taxon>
        <taxon>Eubacteriales</taxon>
        <taxon>Symbiobacteriaceae</taxon>
        <taxon>Symbiobacterium</taxon>
    </lineage>
</organism>
<feature type="chain" id="PRO_1000197131" description="N-(5'-phosphoribosyl)anthranilate isomerase">
    <location>
        <begin position="1"/>
        <end position="222"/>
    </location>
</feature>
<reference key="1">
    <citation type="journal article" date="2004" name="Nucleic Acids Res.">
        <title>Genome sequence of Symbiobacterium thermophilum, an uncultivable bacterium that depends on microbial commensalism.</title>
        <authorList>
            <person name="Ueda K."/>
            <person name="Yamashita A."/>
            <person name="Ishikawa J."/>
            <person name="Shimada M."/>
            <person name="Watsuji T."/>
            <person name="Morimura K."/>
            <person name="Ikeda H."/>
            <person name="Hattori M."/>
            <person name="Beppu T."/>
        </authorList>
    </citation>
    <scope>NUCLEOTIDE SEQUENCE [LARGE SCALE GENOMIC DNA]</scope>
    <source>
        <strain>DSM 24528 / JCM 14929 / IAM 14863 / T</strain>
    </source>
</reference>
<protein>
    <recommendedName>
        <fullName evidence="1">N-(5'-phosphoribosyl)anthranilate isomerase</fullName>
        <shortName evidence="1">PRAI</shortName>
        <ecNumber evidence="1">5.3.1.24</ecNumber>
    </recommendedName>
</protein>
<sequence>MWVKICGLQFMKDAVAAVEAGADALGFVFAPSRRQVTPERVEALISGLPPETVTVGVFVDAPMEEIRRAVTLSGLKAVQLHGSEPPEAIDQIGLPVIKAIRIRGPEDLARLPDYRNAAGLLLEPYVEGQAGGTGQTLDPTLVRWAAQTLERAGVPLAGPDEPLTPGRPKLILAGGLTPDNVADAIARAQPGGVDVSSGVENGGVKDINKIYAFVAAAKGVAR</sequence>
<comment type="catalytic activity">
    <reaction evidence="1">
        <text>N-(5-phospho-beta-D-ribosyl)anthranilate = 1-(2-carboxyphenylamino)-1-deoxy-D-ribulose 5-phosphate</text>
        <dbReference type="Rhea" id="RHEA:21540"/>
        <dbReference type="ChEBI" id="CHEBI:18277"/>
        <dbReference type="ChEBI" id="CHEBI:58613"/>
        <dbReference type="EC" id="5.3.1.24"/>
    </reaction>
</comment>
<comment type="pathway">
    <text evidence="1">Amino-acid biosynthesis; L-tryptophan biosynthesis; L-tryptophan from chorismate: step 3/5.</text>
</comment>
<comment type="similarity">
    <text evidence="1">Belongs to the TrpF family.</text>
</comment>
<keyword id="KW-0028">Amino-acid biosynthesis</keyword>
<keyword id="KW-0057">Aromatic amino acid biosynthesis</keyword>
<keyword id="KW-0413">Isomerase</keyword>
<keyword id="KW-1185">Reference proteome</keyword>
<keyword id="KW-0822">Tryptophan biosynthesis</keyword>
<accession>Q67PJ5</accession>
<proteinExistence type="inferred from homology"/>
<name>TRPF_SYMTH</name>
<evidence type="ECO:0000255" key="1">
    <source>
        <dbReference type="HAMAP-Rule" id="MF_00135"/>
    </source>
</evidence>